<geneLocation type="chloroplast"/>
<gene>
    <name evidence="1" type="primary">psbT</name>
</gene>
<feature type="chain" id="PRO_0000217909" description="Photosystem II reaction center protein T">
    <location>
        <begin position="1"/>
        <end position="35"/>
    </location>
</feature>
<feature type="transmembrane region" description="Helical" evidence="1">
    <location>
        <begin position="3"/>
        <end position="23"/>
    </location>
</feature>
<keyword id="KW-0150">Chloroplast</keyword>
<keyword id="KW-0472">Membrane</keyword>
<keyword id="KW-0602">Photosynthesis</keyword>
<keyword id="KW-0604">Photosystem II</keyword>
<keyword id="KW-0934">Plastid</keyword>
<keyword id="KW-0793">Thylakoid</keyword>
<keyword id="KW-0812">Transmembrane</keyword>
<keyword id="KW-1133">Transmembrane helix</keyword>
<accession>Q9GFA4</accession>
<evidence type="ECO:0000255" key="1">
    <source>
        <dbReference type="HAMAP-Rule" id="MF_00808"/>
    </source>
</evidence>
<organism>
    <name type="scientific">Cabomba caroliniana</name>
    <name type="common">Carolina fanwort</name>
    <dbReference type="NCBI Taxonomy" id="4426"/>
    <lineage>
        <taxon>Eukaryota</taxon>
        <taxon>Viridiplantae</taxon>
        <taxon>Streptophyta</taxon>
        <taxon>Embryophyta</taxon>
        <taxon>Tracheophyta</taxon>
        <taxon>Spermatophyta</taxon>
        <taxon>Magnoliopsida</taxon>
        <taxon>Nymphaeales</taxon>
        <taxon>Cabombaceae</taxon>
        <taxon>Cabomba</taxon>
    </lineage>
</organism>
<comment type="function">
    <text evidence="1">Found at the monomer-monomer interface of the photosystem II (PS II) dimer, plays a role in assembly and dimerization of PSII. PSII is a light-driven water plastoquinone oxidoreductase, using light energy to abstract electrons from H(2)O, generating a proton gradient subsequently used for ATP formation.</text>
</comment>
<comment type="subunit">
    <text evidence="1">PSII is composed of 1 copy each of membrane proteins PsbA, PsbB, PsbC, PsbD, PsbE, PsbF, PsbH, PsbI, PsbJ, PsbK, PsbL, PsbM, PsbT, PsbY, PsbZ, Psb30/Ycf12, at least 3 peripheral proteins of the oxygen-evolving complex and a large number of cofactors. It forms dimeric complexes.</text>
</comment>
<comment type="subcellular location">
    <subcellularLocation>
        <location evidence="1">Plastid</location>
        <location evidence="1">Chloroplast thylakoid membrane</location>
        <topology evidence="1">Single-pass membrane protein</topology>
    </subcellularLocation>
</comment>
<comment type="similarity">
    <text evidence="1">Belongs to the PsbT family.</text>
</comment>
<reference key="1">
    <citation type="journal article" date="2000" name="Am. J. Bot.">
        <title>Utility of 17 chloroplast genes for inferring the phylogeny of the basal angiosperms.</title>
        <authorList>
            <person name="Graham S.W."/>
            <person name="Olmstead R.G."/>
        </authorList>
    </citation>
    <scope>NUCLEOTIDE SEQUENCE [GENOMIC DNA]</scope>
</reference>
<name>PSBT_CABCA</name>
<protein>
    <recommendedName>
        <fullName evidence="1">Photosystem II reaction center protein T</fullName>
        <shortName evidence="1">PSII-T</shortName>
    </recommendedName>
</protein>
<dbReference type="EMBL" id="AF123845">
    <property type="protein sequence ID" value="AAG26258.1"/>
    <property type="molecule type" value="Genomic_DNA"/>
</dbReference>
<dbReference type="RefSeq" id="YP_009310545.1">
    <property type="nucleotide sequence ID" value="NC_031505.1"/>
</dbReference>
<dbReference type="SMR" id="Q9GFA4"/>
<dbReference type="GeneID" id="29991309"/>
<dbReference type="GO" id="GO:0009535">
    <property type="term" value="C:chloroplast thylakoid membrane"/>
    <property type="evidence" value="ECO:0007669"/>
    <property type="project" value="UniProtKB-SubCell"/>
</dbReference>
<dbReference type="GO" id="GO:0009539">
    <property type="term" value="C:photosystem II reaction center"/>
    <property type="evidence" value="ECO:0007669"/>
    <property type="project" value="InterPro"/>
</dbReference>
<dbReference type="GO" id="GO:0015979">
    <property type="term" value="P:photosynthesis"/>
    <property type="evidence" value="ECO:0007669"/>
    <property type="project" value="UniProtKB-UniRule"/>
</dbReference>
<dbReference type="HAMAP" id="MF_00808">
    <property type="entry name" value="PSII_PsbT"/>
    <property type="match status" value="1"/>
</dbReference>
<dbReference type="InterPro" id="IPR001743">
    <property type="entry name" value="PSII_PsbT"/>
</dbReference>
<dbReference type="InterPro" id="IPR037268">
    <property type="entry name" value="PSII_PsbT_sf"/>
</dbReference>
<dbReference type="PANTHER" id="PTHR36411">
    <property type="match status" value="1"/>
</dbReference>
<dbReference type="PANTHER" id="PTHR36411:SF2">
    <property type="entry name" value="PHOTOSYSTEM II REACTION CENTER PROTEIN T"/>
    <property type="match status" value="1"/>
</dbReference>
<dbReference type="Pfam" id="PF01405">
    <property type="entry name" value="PsbT"/>
    <property type="match status" value="1"/>
</dbReference>
<dbReference type="SUPFAM" id="SSF161029">
    <property type="entry name" value="Photosystem II reaction center protein T, PsbT"/>
    <property type="match status" value="1"/>
</dbReference>
<sequence>MEALVYTFLLVSTLGIIFFAIFFREPPKVPTKKAK</sequence>
<proteinExistence type="inferred from homology"/>